<feature type="chain" id="PRO_0000296667" description="Peroxisome proliferator-activated receptor gamma coactivator-related protein 1">
    <location>
        <begin position="1"/>
        <end position="1644"/>
    </location>
</feature>
<feature type="domain" description="RRM" evidence="3">
    <location>
        <begin position="1523"/>
        <end position="1599"/>
    </location>
</feature>
<feature type="region of interest" description="Disordered" evidence="4">
    <location>
        <begin position="1"/>
        <end position="61"/>
    </location>
</feature>
<feature type="region of interest" description="Disordered" evidence="4">
    <location>
        <begin position="170"/>
        <end position="249"/>
    </location>
</feature>
<feature type="region of interest" description="Necessary for interaction with CREB1 and NRF1 and for transcriptional coactivation" evidence="1">
    <location>
        <begin position="425"/>
        <end position="460"/>
    </location>
</feature>
<feature type="region of interest" description="Disordered" evidence="4">
    <location>
        <begin position="429"/>
        <end position="616"/>
    </location>
</feature>
<feature type="region of interest" description="Disordered" evidence="4">
    <location>
        <begin position="646"/>
        <end position="761"/>
    </location>
</feature>
<feature type="region of interest" description="Disordered" evidence="4">
    <location>
        <begin position="773"/>
        <end position="884"/>
    </location>
</feature>
<feature type="region of interest" description="Disordered" evidence="4">
    <location>
        <begin position="978"/>
        <end position="1074"/>
    </location>
</feature>
<feature type="region of interest" description="Disordered" evidence="4">
    <location>
        <begin position="1322"/>
        <end position="1507"/>
    </location>
</feature>
<feature type="region of interest" description="Necessary for interaction with CREB1 and NRF1" evidence="1">
    <location>
        <begin position="1361"/>
        <end position="1432"/>
    </location>
</feature>
<feature type="compositionally biased region" description="Pro residues" evidence="4">
    <location>
        <begin position="12"/>
        <end position="22"/>
    </location>
</feature>
<feature type="compositionally biased region" description="Low complexity" evidence="4">
    <location>
        <begin position="213"/>
        <end position="222"/>
    </location>
</feature>
<feature type="compositionally biased region" description="Polar residues" evidence="4">
    <location>
        <begin position="437"/>
        <end position="446"/>
    </location>
</feature>
<feature type="compositionally biased region" description="Basic residues" evidence="4">
    <location>
        <begin position="448"/>
        <end position="457"/>
    </location>
</feature>
<feature type="compositionally biased region" description="Polar residues" evidence="4">
    <location>
        <begin position="475"/>
        <end position="496"/>
    </location>
</feature>
<feature type="compositionally biased region" description="Low complexity" evidence="4">
    <location>
        <begin position="515"/>
        <end position="524"/>
    </location>
</feature>
<feature type="compositionally biased region" description="Polar residues" evidence="4">
    <location>
        <begin position="556"/>
        <end position="572"/>
    </location>
</feature>
<feature type="compositionally biased region" description="Basic and acidic residues" evidence="4">
    <location>
        <begin position="691"/>
        <end position="702"/>
    </location>
</feature>
<feature type="compositionally biased region" description="Polar residues" evidence="4">
    <location>
        <begin position="811"/>
        <end position="821"/>
    </location>
</feature>
<feature type="compositionally biased region" description="Pro residues" evidence="4">
    <location>
        <begin position="828"/>
        <end position="864"/>
    </location>
</feature>
<feature type="compositionally biased region" description="Pro residues" evidence="4">
    <location>
        <begin position="874"/>
        <end position="884"/>
    </location>
</feature>
<feature type="compositionally biased region" description="Low complexity" evidence="4">
    <location>
        <begin position="1409"/>
        <end position="1433"/>
    </location>
</feature>
<feature type="compositionally biased region" description="Low complexity" evidence="4">
    <location>
        <begin position="1453"/>
        <end position="1489"/>
    </location>
</feature>
<feature type="modified residue" description="Phosphoserine" evidence="2">
    <location>
        <position position="232"/>
    </location>
</feature>
<feature type="modified residue" description="Phosphoserine" evidence="2">
    <location>
        <position position="541"/>
    </location>
</feature>
<feature type="modified residue" description="Phosphoserine" evidence="2">
    <location>
        <position position="1059"/>
    </location>
</feature>
<feature type="modified residue" description="Phosphoserine" evidence="2">
    <location>
        <position position="1393"/>
    </location>
</feature>
<feature type="modified residue" description="Phosphoserine" evidence="2">
    <location>
        <position position="1395"/>
    </location>
</feature>
<feature type="splice variant" id="VSP_027232" description="In isoform 4." evidence="8">
    <location>
        <begin position="1"/>
        <end position="925"/>
    </location>
</feature>
<feature type="splice variant" id="VSP_027233" description="In isoform 2 and isoform 5." evidence="7 9">
    <original>E</original>
    <variation>EQ</variation>
    <location>
        <position position="109"/>
    </location>
</feature>
<feature type="splice variant" id="VSP_027234" description="In isoform 3." evidence="9">
    <location>
        <begin position="190"/>
        <end position="192"/>
    </location>
</feature>
<feature type="splice variant" id="VSP_027235" description="In isoform 2." evidence="7">
    <original>G</original>
    <variation>GS</variation>
    <location>
        <position position="1186"/>
    </location>
</feature>
<feature type="splice variant" id="VSP_027236" description="In isoform 3." evidence="9">
    <original>IDIPQEKKPLDRLQAPELANV</original>
    <variation>SSARGVTLTLTPIGKTLILLL</variation>
    <location>
        <begin position="1187"/>
        <end position="1207"/>
    </location>
</feature>
<feature type="splice variant" id="VSP_027237" description="In isoform 3." evidence="9">
    <location>
        <begin position="1208"/>
        <end position="1644"/>
    </location>
</feature>
<feature type="sequence conflict" description="In Ref. 2; BAC31964." evidence="10" ref="2">
    <location>
        <position position="242"/>
    </location>
</feature>
<feature type="sequence conflict" description="In Ref. 1; BAC65604." evidence="10" ref="1">
    <original>K</original>
    <variation>E</variation>
    <location>
        <position position="258"/>
    </location>
</feature>
<feature type="sequence conflict" description="In Ref. 1; BAC65604." evidence="10" ref="1">
    <original>D</original>
    <variation>N</variation>
    <location>
        <position position="409"/>
    </location>
</feature>
<feature type="sequence conflict" description="In Ref. 2; BAE28245." evidence="10" ref="2">
    <original>L</original>
    <variation>I</variation>
    <location>
        <position position="437"/>
    </location>
</feature>
<feature type="sequence conflict" description="In Ref. 1; BAC65604." evidence="10" ref="1">
    <original>P</original>
    <variation>S</variation>
    <location>
        <position position="461"/>
    </location>
</feature>
<feature type="sequence conflict" description="In Ref. 1; BAC65604." evidence="10" ref="1">
    <original>L</original>
    <variation>P</variation>
    <location>
        <position position="508"/>
    </location>
</feature>
<feature type="sequence conflict" description="In Ref. 1; BAC65604." evidence="10" ref="1">
    <original>I</original>
    <variation>V</variation>
    <location>
        <position position="629"/>
    </location>
</feature>
<feature type="sequence conflict" description="In Ref. 1; BAC65604." evidence="10" ref="1">
    <original>P</original>
    <variation>S</variation>
    <location>
        <position position="864"/>
    </location>
</feature>
<feature type="sequence conflict" description="In Ref. 1; BAC65604." evidence="10" ref="1">
    <original>G</original>
    <variation>S</variation>
    <location>
        <position position="1007"/>
    </location>
</feature>
<feature type="sequence conflict" description="In Ref. 1; BAC65604." evidence="10" ref="1">
    <location>
        <begin position="1432"/>
        <end position="1433"/>
    </location>
</feature>
<sequence>MAARRGRRDRVAPPPTGGPGPDPGGGVRGGSWASRSQAPYGTGGSVSAAEQVHEEGNDSSFVSLSRLGPSLREKDLEMEELILQDETLLETMQSYMDASLISLIEDFGESRLSLEDQNEMSLLTALTEILDNADSENLSPFDTIPDSELLVSPRESSSLHKLLNLSRTPPERDLITPIDPLGPSTGSSRVSGVEVPLADSPWDFSPPPFLETSSPKLPSWRPSRPRPRWGQSPPPQQRSDGEEEEEVAGFSGQMLAGKLDNSVNNVLDFPMHLACPEEEGTAEGADAPASAPGDESISSLSELVRAMHPYCLPNLTHLASLEGELEGQADADADELTLPEGCVVLEIVGQAATTGDDLEIPVVVRQIPSGSQSVLLDESLGSSPALQLLMPTMESETEAAVPEVAPCPDEELPLSSACLLEPREIMESLTPKEPQSLPASASQGSQKVPRKGRKKKNKEQPTACVEACTRRLRSSSRGQSTVSAEVNSQAGSSQKQPQEELQREAAALQSRGKPRAWARAWAAALEKTGSENLERSAGQDSPAEEDALDLCPKLLETSQANPTLSLNDSAQADSMPVDSVEGDSPAVGNAAPGDQASSGTELVGSLPVGPNLTSPVLADKKGIEPAVAIPTSDNLSPADVLANTVAADPVPNDPAPADPVLVKCRPTDPRRAAAAAAAAAQGSRPSLQSADHPKVVSPEGKDVVGPLKVEGSTSATTQEAKPRPLSLSEYRQRRQQRQTEAEDRNSQPPVVGKWPSLPETPTELADIPCLVPSAPARKTAPQRSPIAVPETVSVGSNPVSPTPEPSASKLMVSTHSEQVSSHEMPLAVRPPPPPLPSVSPAGPIPSTVPAPLPPFPPSVPPLLPLPSGGHGVPRLPPPPLQPPGLPVSMRQMPPDPYTQYAPVPPWSCYPSVSPPGYSCLPPPPTMPIVSGTPGTYAVPPTCNVPWVPPPAPVSPYSSSCAYGSLGWGPGLQQPPFWSTVSPPPLSSVPTGRAVPPTPVEPSGDPAGPPEDVLPGPVTPSLSSGPASPAAPPVEPTKPEAQPVPVSPQPKHKVSTLVQSPQIKAPPTLSTEGVVFEESVSERLKSETQENRPKEKPISTAIKSVPVPKQSAVAKLPAVHPARLRKLSFLPTPRAQGPEDVVQAFISEIGIEASDLSSLLEQFEKSEAKKECPLPASADSLAVGNSGIDIPQEKKPLDRLQAPELANVAGLTPPATPPHQLWKPLAAVSLLAKAKSPKSTAQEGTLKPEGITEAKPPATACLQEGAHSPSPVHVGSGDHDYCVRSRTPPKRMPALVISEVGSRWNVKRHQDITIKPVLSLGSAAPPLPCTATSQEPLDHRTSVEQADPSAPCFAPSTLLSPEASPCRSEMNARTPPEPSDKQQSMRCYRKACRSVSPSSRGWQGRRGRSSRSVSSGSSRTSEASSSSSVSSSSRSRSRSRSRSFSPPNKRWRRSSCSSSGRSRRCSSSSSSSSSSSSCSSRSRSPSVSPCRRSDRRRRYSSYRANDHYQRQRVLQKERAIEERRVVFIGKIPGRMTRSELKQRFSVFGEIEECTIHFRVQGDNYGFVTYRYAEEAFAAIESGHKLRQADEQPFDLCFGGRRQFCKRSYSDLDSNREDFDPAPVKSKFDSLDFDTLLKQAQKNLRR</sequence>
<dbReference type="EMBL" id="AK122322">
    <property type="protein sequence ID" value="BAC65604.1"/>
    <property type="status" value="ALT_INIT"/>
    <property type="molecule type" value="mRNA"/>
</dbReference>
<dbReference type="EMBL" id="AK044522">
    <property type="protein sequence ID" value="BAC31964.1"/>
    <property type="molecule type" value="mRNA"/>
</dbReference>
<dbReference type="EMBL" id="AK147947">
    <property type="protein sequence ID" value="BAE28245.1"/>
    <property type="molecule type" value="mRNA"/>
</dbReference>
<dbReference type="EMBL" id="BC013720">
    <property type="protein sequence ID" value="AAH13720.1"/>
    <property type="molecule type" value="mRNA"/>
</dbReference>
<dbReference type="EMBL" id="BC066048">
    <property type="protein sequence ID" value="AAH66048.1"/>
    <property type="molecule type" value="mRNA"/>
</dbReference>
<dbReference type="CCDS" id="CCDS38005.1">
    <molecule id="Q6NZN1-1"/>
</dbReference>
<dbReference type="CCDS" id="CCDS89404.1">
    <molecule id="Q6NZN1-2"/>
</dbReference>
<dbReference type="RefSeq" id="NP_001074683.1">
    <molecule id="Q6NZN1-1"/>
    <property type="nucleotide sequence ID" value="NM_001081214.1"/>
</dbReference>
<dbReference type="RefSeq" id="NP_001333730.1">
    <molecule id="Q6NZN1-2"/>
    <property type="nucleotide sequence ID" value="NM_001346801.1"/>
</dbReference>
<dbReference type="RefSeq" id="XP_017173655.1">
    <molecule id="Q6NZN1-5"/>
    <property type="nucleotide sequence ID" value="XM_017318166.3"/>
</dbReference>
<dbReference type="SMR" id="Q6NZN1"/>
<dbReference type="FunCoup" id="Q6NZN1">
    <property type="interactions" value="3247"/>
</dbReference>
<dbReference type="IntAct" id="Q6NZN1">
    <property type="interactions" value="1"/>
</dbReference>
<dbReference type="STRING" id="10090.ENSMUSP00000107530"/>
<dbReference type="GlyGen" id="Q6NZN1">
    <property type="glycosylation" value="7 sites, 1 O-linked glycan (1 site)"/>
</dbReference>
<dbReference type="iPTMnet" id="Q6NZN1"/>
<dbReference type="PhosphoSitePlus" id="Q6NZN1"/>
<dbReference type="PaxDb" id="10090-ENSMUSP00000107530"/>
<dbReference type="PeptideAtlas" id="Q6NZN1"/>
<dbReference type="ProteomicsDB" id="291845">
    <molecule id="Q6NZN1-1"/>
</dbReference>
<dbReference type="ProteomicsDB" id="291846">
    <molecule id="Q6NZN1-2"/>
</dbReference>
<dbReference type="ProteomicsDB" id="291847">
    <molecule id="Q6NZN1-3"/>
</dbReference>
<dbReference type="ProteomicsDB" id="291848">
    <molecule id="Q6NZN1-4"/>
</dbReference>
<dbReference type="ProteomicsDB" id="291849">
    <molecule id="Q6NZN1-5"/>
</dbReference>
<dbReference type="Antibodypedia" id="48608">
    <property type="antibodies" value="118 antibodies from 25 providers"/>
</dbReference>
<dbReference type="Ensembl" id="ENSMUST00000062322.11">
    <molecule id="Q6NZN1-2"/>
    <property type="protein sequence ID" value="ENSMUSP00000079389.4"/>
    <property type="gene ID" value="ENSMUSG00000055491.15"/>
</dbReference>
<dbReference type="Ensembl" id="ENSMUST00000099392.10">
    <molecule id="Q6NZN1-3"/>
    <property type="protein sequence ID" value="ENSMUSP00000096990.4"/>
    <property type="gene ID" value="ENSMUSG00000055491.15"/>
</dbReference>
<dbReference type="Ensembl" id="ENSMUST00000111899.8">
    <molecule id="Q6NZN1-1"/>
    <property type="protein sequence ID" value="ENSMUSP00000107530.2"/>
    <property type="gene ID" value="ENSMUSG00000055491.15"/>
</dbReference>
<dbReference type="GeneID" id="226169"/>
<dbReference type="KEGG" id="mmu:226169"/>
<dbReference type="UCSC" id="uc008hsb.1">
    <molecule id="Q6NZN1-5"/>
    <property type="organism name" value="mouse"/>
</dbReference>
<dbReference type="UCSC" id="uc008hsc.1">
    <molecule id="Q6NZN1-2"/>
    <property type="organism name" value="mouse"/>
</dbReference>
<dbReference type="UCSC" id="uc008hsd.1">
    <molecule id="Q6NZN1-1"/>
    <property type="organism name" value="mouse"/>
</dbReference>
<dbReference type="UCSC" id="uc008hse.1">
    <molecule id="Q6NZN1-3"/>
    <property type="organism name" value="mouse"/>
</dbReference>
<dbReference type="AGR" id="MGI:2385096"/>
<dbReference type="CTD" id="23082"/>
<dbReference type="MGI" id="MGI:2385096">
    <property type="gene designation" value="Pprc1"/>
</dbReference>
<dbReference type="VEuPathDB" id="HostDB:ENSMUSG00000055491"/>
<dbReference type="eggNOG" id="ENOG502QQME">
    <property type="taxonomic scope" value="Eukaryota"/>
</dbReference>
<dbReference type="GeneTree" id="ENSGT00950000183137"/>
<dbReference type="HOGENOM" id="CLU_001907_0_0_1"/>
<dbReference type="InParanoid" id="Q6NZN1"/>
<dbReference type="OMA" id="WHRAREQ"/>
<dbReference type="OrthoDB" id="86091at9989"/>
<dbReference type="TreeFam" id="TF343068"/>
<dbReference type="BioGRID-ORCS" id="226169">
    <property type="hits" value="23 hits in 80 CRISPR screens"/>
</dbReference>
<dbReference type="ChiTaRS" id="Pprc1">
    <property type="organism name" value="mouse"/>
</dbReference>
<dbReference type="PRO" id="PR:Q6NZN1"/>
<dbReference type="Proteomes" id="UP000000589">
    <property type="component" value="Chromosome 19"/>
</dbReference>
<dbReference type="RNAct" id="Q6NZN1">
    <property type="molecule type" value="protein"/>
</dbReference>
<dbReference type="Bgee" id="ENSMUSG00000055491">
    <property type="expression patterns" value="Expressed in otic placode and 260 other cell types or tissues"/>
</dbReference>
<dbReference type="ExpressionAtlas" id="Q6NZN1">
    <property type="expression patterns" value="baseline and differential"/>
</dbReference>
<dbReference type="GO" id="GO:0005654">
    <property type="term" value="C:nucleoplasm"/>
    <property type="evidence" value="ECO:0007669"/>
    <property type="project" value="Ensembl"/>
</dbReference>
<dbReference type="GO" id="GO:0003723">
    <property type="term" value="F:RNA binding"/>
    <property type="evidence" value="ECO:0007669"/>
    <property type="project" value="UniProtKB-KW"/>
</dbReference>
<dbReference type="GO" id="GO:0003712">
    <property type="term" value="F:transcription coregulator activity"/>
    <property type="evidence" value="ECO:0007669"/>
    <property type="project" value="InterPro"/>
</dbReference>
<dbReference type="CDD" id="cd12624">
    <property type="entry name" value="RRM_PRC"/>
    <property type="match status" value="1"/>
</dbReference>
<dbReference type="FunFam" id="3.30.70.330:FF:000199">
    <property type="entry name" value="Putative peroxisome proliferator-activated receptor gamma coactivator-related protein 1"/>
    <property type="match status" value="1"/>
</dbReference>
<dbReference type="Gene3D" id="3.30.70.330">
    <property type="match status" value="1"/>
</dbReference>
<dbReference type="InterPro" id="IPR012677">
    <property type="entry name" value="Nucleotide-bd_a/b_plait_sf"/>
</dbReference>
<dbReference type="InterPro" id="IPR034605">
    <property type="entry name" value="PGC-1"/>
</dbReference>
<dbReference type="InterPro" id="IPR034834">
    <property type="entry name" value="PRC_RRM"/>
</dbReference>
<dbReference type="InterPro" id="IPR035979">
    <property type="entry name" value="RBD_domain_sf"/>
</dbReference>
<dbReference type="InterPro" id="IPR000504">
    <property type="entry name" value="RRM_dom"/>
</dbReference>
<dbReference type="PANTHER" id="PTHR15528">
    <property type="entry name" value="PEROXISOME PROLIFERATOR ACTIVATED RECEPTOR GAMMA COACTIVATOR 1 PGC-1 -RELATED"/>
    <property type="match status" value="1"/>
</dbReference>
<dbReference type="PANTHER" id="PTHR15528:SF5">
    <property type="entry name" value="PEROXISOME PROLIFERATOR-ACTIVATED RECEPTOR GAMMA COACTIVATOR-RELATED PROTEIN 1"/>
    <property type="match status" value="1"/>
</dbReference>
<dbReference type="Pfam" id="PF00076">
    <property type="entry name" value="RRM_1"/>
    <property type="match status" value="1"/>
</dbReference>
<dbReference type="SMART" id="SM00360">
    <property type="entry name" value="RRM"/>
    <property type="match status" value="1"/>
</dbReference>
<dbReference type="SUPFAM" id="SSF54928">
    <property type="entry name" value="RNA-binding domain, RBD"/>
    <property type="match status" value="1"/>
</dbReference>
<dbReference type="PROSITE" id="PS50102">
    <property type="entry name" value="RRM"/>
    <property type="match status" value="1"/>
</dbReference>
<protein>
    <recommendedName>
        <fullName>Peroxisome proliferator-activated receptor gamma coactivator-related protein 1</fullName>
    </recommendedName>
    <alternativeName>
        <fullName>PGC-1-related coactivator</fullName>
        <shortName>PRC</shortName>
    </alternativeName>
</protein>
<reference key="1">
    <citation type="journal article" date="2003" name="DNA Res.">
        <title>Prediction of the coding sequences of mouse homologues of KIAA gene: II. The complete nucleotide sequences of 400 mouse KIAA-homologous cDNAs identified by screening of terminal sequences of cDNA clones randomly sampled from size-fractionated libraries.</title>
        <authorList>
            <person name="Okazaki N."/>
            <person name="Kikuno R."/>
            <person name="Ohara R."/>
            <person name="Inamoto S."/>
            <person name="Aizawa H."/>
            <person name="Yuasa S."/>
            <person name="Nakajima D."/>
            <person name="Nagase T."/>
            <person name="Ohara O."/>
            <person name="Koga H."/>
        </authorList>
    </citation>
    <scope>NUCLEOTIDE SEQUENCE [LARGE SCALE MRNA] (ISOFORM 2)</scope>
    <source>
        <tissue>Brain</tissue>
    </source>
</reference>
<reference key="2">
    <citation type="journal article" date="2005" name="Science">
        <title>The transcriptional landscape of the mammalian genome.</title>
        <authorList>
            <person name="Carninci P."/>
            <person name="Kasukawa T."/>
            <person name="Katayama S."/>
            <person name="Gough J."/>
            <person name="Frith M.C."/>
            <person name="Maeda N."/>
            <person name="Oyama R."/>
            <person name="Ravasi T."/>
            <person name="Lenhard B."/>
            <person name="Wells C."/>
            <person name="Kodzius R."/>
            <person name="Shimokawa K."/>
            <person name="Bajic V.B."/>
            <person name="Brenner S.E."/>
            <person name="Batalov S."/>
            <person name="Forrest A.R."/>
            <person name="Zavolan M."/>
            <person name="Davis M.J."/>
            <person name="Wilming L.G."/>
            <person name="Aidinis V."/>
            <person name="Allen J.E."/>
            <person name="Ambesi-Impiombato A."/>
            <person name="Apweiler R."/>
            <person name="Aturaliya R.N."/>
            <person name="Bailey T.L."/>
            <person name="Bansal M."/>
            <person name="Baxter L."/>
            <person name="Beisel K.W."/>
            <person name="Bersano T."/>
            <person name="Bono H."/>
            <person name="Chalk A.M."/>
            <person name="Chiu K.P."/>
            <person name="Choudhary V."/>
            <person name="Christoffels A."/>
            <person name="Clutterbuck D.R."/>
            <person name="Crowe M.L."/>
            <person name="Dalla E."/>
            <person name="Dalrymple B.P."/>
            <person name="de Bono B."/>
            <person name="Della Gatta G."/>
            <person name="di Bernardo D."/>
            <person name="Down T."/>
            <person name="Engstrom P."/>
            <person name="Fagiolini M."/>
            <person name="Faulkner G."/>
            <person name="Fletcher C.F."/>
            <person name="Fukushima T."/>
            <person name="Furuno M."/>
            <person name="Futaki S."/>
            <person name="Gariboldi M."/>
            <person name="Georgii-Hemming P."/>
            <person name="Gingeras T.R."/>
            <person name="Gojobori T."/>
            <person name="Green R.E."/>
            <person name="Gustincich S."/>
            <person name="Harbers M."/>
            <person name="Hayashi Y."/>
            <person name="Hensch T.K."/>
            <person name="Hirokawa N."/>
            <person name="Hill D."/>
            <person name="Huminiecki L."/>
            <person name="Iacono M."/>
            <person name="Ikeo K."/>
            <person name="Iwama A."/>
            <person name="Ishikawa T."/>
            <person name="Jakt M."/>
            <person name="Kanapin A."/>
            <person name="Katoh M."/>
            <person name="Kawasawa Y."/>
            <person name="Kelso J."/>
            <person name="Kitamura H."/>
            <person name="Kitano H."/>
            <person name="Kollias G."/>
            <person name="Krishnan S.P."/>
            <person name="Kruger A."/>
            <person name="Kummerfeld S.K."/>
            <person name="Kurochkin I.V."/>
            <person name="Lareau L.F."/>
            <person name="Lazarevic D."/>
            <person name="Lipovich L."/>
            <person name="Liu J."/>
            <person name="Liuni S."/>
            <person name="McWilliam S."/>
            <person name="Madan Babu M."/>
            <person name="Madera M."/>
            <person name="Marchionni L."/>
            <person name="Matsuda H."/>
            <person name="Matsuzawa S."/>
            <person name="Miki H."/>
            <person name="Mignone F."/>
            <person name="Miyake S."/>
            <person name="Morris K."/>
            <person name="Mottagui-Tabar S."/>
            <person name="Mulder N."/>
            <person name="Nakano N."/>
            <person name="Nakauchi H."/>
            <person name="Ng P."/>
            <person name="Nilsson R."/>
            <person name="Nishiguchi S."/>
            <person name="Nishikawa S."/>
            <person name="Nori F."/>
            <person name="Ohara O."/>
            <person name="Okazaki Y."/>
            <person name="Orlando V."/>
            <person name="Pang K.C."/>
            <person name="Pavan W.J."/>
            <person name="Pavesi G."/>
            <person name="Pesole G."/>
            <person name="Petrovsky N."/>
            <person name="Piazza S."/>
            <person name="Reed J."/>
            <person name="Reid J.F."/>
            <person name="Ring B.Z."/>
            <person name="Ringwald M."/>
            <person name="Rost B."/>
            <person name="Ruan Y."/>
            <person name="Salzberg S.L."/>
            <person name="Sandelin A."/>
            <person name="Schneider C."/>
            <person name="Schoenbach C."/>
            <person name="Sekiguchi K."/>
            <person name="Semple C.A."/>
            <person name="Seno S."/>
            <person name="Sessa L."/>
            <person name="Sheng Y."/>
            <person name="Shibata Y."/>
            <person name="Shimada H."/>
            <person name="Shimada K."/>
            <person name="Silva D."/>
            <person name="Sinclair B."/>
            <person name="Sperling S."/>
            <person name="Stupka E."/>
            <person name="Sugiura K."/>
            <person name="Sultana R."/>
            <person name="Takenaka Y."/>
            <person name="Taki K."/>
            <person name="Tammoja K."/>
            <person name="Tan S.L."/>
            <person name="Tang S."/>
            <person name="Taylor M.S."/>
            <person name="Tegner J."/>
            <person name="Teichmann S.A."/>
            <person name="Ueda H.R."/>
            <person name="van Nimwegen E."/>
            <person name="Verardo R."/>
            <person name="Wei C.L."/>
            <person name="Yagi K."/>
            <person name="Yamanishi H."/>
            <person name="Zabarovsky E."/>
            <person name="Zhu S."/>
            <person name="Zimmer A."/>
            <person name="Hide W."/>
            <person name="Bult C."/>
            <person name="Grimmond S.M."/>
            <person name="Teasdale R.D."/>
            <person name="Liu E.T."/>
            <person name="Brusic V."/>
            <person name="Quackenbush J."/>
            <person name="Wahlestedt C."/>
            <person name="Mattick J.S."/>
            <person name="Hume D.A."/>
            <person name="Kai C."/>
            <person name="Sasaki D."/>
            <person name="Tomaru Y."/>
            <person name="Fukuda S."/>
            <person name="Kanamori-Katayama M."/>
            <person name="Suzuki M."/>
            <person name="Aoki J."/>
            <person name="Arakawa T."/>
            <person name="Iida J."/>
            <person name="Imamura K."/>
            <person name="Itoh M."/>
            <person name="Kato T."/>
            <person name="Kawaji H."/>
            <person name="Kawagashira N."/>
            <person name="Kawashima T."/>
            <person name="Kojima M."/>
            <person name="Kondo S."/>
            <person name="Konno H."/>
            <person name="Nakano K."/>
            <person name="Ninomiya N."/>
            <person name="Nishio T."/>
            <person name="Okada M."/>
            <person name="Plessy C."/>
            <person name="Shibata K."/>
            <person name="Shiraki T."/>
            <person name="Suzuki S."/>
            <person name="Tagami M."/>
            <person name="Waki K."/>
            <person name="Watahiki A."/>
            <person name="Okamura-Oho Y."/>
            <person name="Suzuki H."/>
            <person name="Kawai J."/>
            <person name="Hayashizaki Y."/>
        </authorList>
    </citation>
    <scope>NUCLEOTIDE SEQUENCE [LARGE SCALE MRNA] (ISOFORM 3)</scope>
    <scope>NUCLEOTIDE SEQUENCE [LARGE SCALE MRNA] OF 1-1249 (ISOFORM 5)</scope>
    <source>
        <strain>C57BL/6J</strain>
        <tissue>Melanocyte</tissue>
        <tissue>Retina</tissue>
    </source>
</reference>
<reference key="3">
    <citation type="journal article" date="2004" name="Genome Res.">
        <title>The status, quality, and expansion of the NIH full-length cDNA project: the Mammalian Gene Collection (MGC).</title>
        <authorList>
            <consortium name="The MGC Project Team"/>
        </authorList>
    </citation>
    <scope>NUCLEOTIDE SEQUENCE [LARGE SCALE MRNA] (ISOFORMS 1 AND 4)</scope>
    <source>
        <strain>C57BL/6J</strain>
        <strain>FVB/N</strain>
        <tissue>Fetal brain</tissue>
        <tissue>Mammary tumor</tissue>
    </source>
</reference>
<reference key="4">
    <citation type="journal article" date="2001" name="Mol. Cell. Biol.">
        <title>Pgc-1-related coactivator, a novel, serum-inducible coactivator of nuclear respiratory factor 1-dependent transcription in mammalian cells.</title>
        <authorList>
            <person name="Andersson U."/>
            <person name="Scarpulla R.C."/>
        </authorList>
    </citation>
    <scope>INDUCTION</scope>
    <scope>SUBCELLULAR LOCATION</scope>
    <scope>TISSUE SPECIFICITY</scope>
</reference>
<reference key="5">
    <citation type="journal article" date="2006" name="Mol. Cell. Biol.">
        <title>PGC-1-related coactivator: immediate early expression and characterization of a CREB/NRF-1 binding domain associated with cytochrome c promoter occupancy and respiratory growth.</title>
        <authorList>
            <person name="Vercauteren K."/>
            <person name="Pasko R.A."/>
            <person name="Gleyzer N."/>
            <person name="Marino V.M."/>
            <person name="Scarpulla R.C."/>
        </authorList>
    </citation>
    <scope>INDUCTION</scope>
</reference>
<proteinExistence type="evidence at protein level"/>
<comment type="function">
    <text evidence="1">Acts as a coactivator during transcriptional activation of nuclear genes related to mitochondrial biogenesis and cell growth. Involved in the transcription coactivation of CREB and NRF1 target genes (By similarity).</text>
</comment>
<comment type="subunit">
    <text evidence="1">Interacts with CREB1 and NRF1.</text>
</comment>
<comment type="subcellular location">
    <subcellularLocation>
        <location evidence="5">Nucleus</location>
    </subcellularLocation>
    <text>Colocalizes with NRF1.</text>
</comment>
<comment type="alternative products">
    <event type="alternative splicing"/>
    <isoform>
        <id>Q6NZN1-1</id>
        <name>1</name>
        <sequence type="displayed"/>
    </isoform>
    <isoform>
        <id>Q6NZN1-2</id>
        <name>2</name>
        <sequence type="described" ref="VSP_027233 VSP_027235"/>
    </isoform>
    <isoform>
        <id>Q6NZN1-3</id>
        <name>3</name>
        <sequence type="described" ref="VSP_027234 VSP_027236 VSP_027237"/>
    </isoform>
    <isoform>
        <id>Q6NZN1-4</id>
        <name>4</name>
        <sequence type="described" ref="VSP_027232"/>
    </isoform>
    <isoform>
        <id>Q6NZN1-5</id>
        <name>5</name>
        <sequence type="described" ref="VSP_027233"/>
    </isoform>
</comment>
<comment type="tissue specificity">
    <text evidence="5">Expressed in liver, heart, skeletal muscle, kidney and white and brown adipose tissues.</text>
</comment>
<comment type="induction">
    <text evidence="5 6">Up-regulated by serum (at protein level). Up-regulated by serum. Up-regulated weakly in brown adipose tissue by exposure of animals to cold.</text>
</comment>
<comment type="sequence caution" evidence="10">
    <conflict type="erroneous initiation">
        <sequence resource="EMBL-CDS" id="BAC65604"/>
    </conflict>
</comment>
<name>PPRC1_MOUSE</name>
<organism>
    <name type="scientific">Mus musculus</name>
    <name type="common">Mouse</name>
    <dbReference type="NCBI Taxonomy" id="10090"/>
    <lineage>
        <taxon>Eukaryota</taxon>
        <taxon>Metazoa</taxon>
        <taxon>Chordata</taxon>
        <taxon>Craniata</taxon>
        <taxon>Vertebrata</taxon>
        <taxon>Euteleostomi</taxon>
        <taxon>Mammalia</taxon>
        <taxon>Eutheria</taxon>
        <taxon>Euarchontoglires</taxon>
        <taxon>Glires</taxon>
        <taxon>Rodentia</taxon>
        <taxon>Myomorpha</taxon>
        <taxon>Muroidea</taxon>
        <taxon>Muridae</taxon>
        <taxon>Murinae</taxon>
        <taxon>Mus</taxon>
        <taxon>Mus</taxon>
    </lineage>
</organism>
<accession>Q6NZN1</accession>
<accession>Q3UGG3</accession>
<accession>Q80TW6</accession>
<accession>Q8BXP6</accession>
<accession>Q91YW8</accession>
<gene>
    <name type="primary">Pprc1</name>
    <name type="synonym">Kiaa0595</name>
</gene>
<keyword id="KW-0010">Activator</keyword>
<keyword id="KW-0025">Alternative splicing</keyword>
<keyword id="KW-0539">Nucleus</keyword>
<keyword id="KW-0597">Phosphoprotein</keyword>
<keyword id="KW-1185">Reference proteome</keyword>
<keyword id="KW-0694">RNA-binding</keyword>
<keyword id="KW-0804">Transcription</keyword>
<keyword id="KW-0805">Transcription regulation</keyword>
<evidence type="ECO:0000250" key="1"/>
<evidence type="ECO:0000250" key="2">
    <source>
        <dbReference type="UniProtKB" id="Q5VV67"/>
    </source>
</evidence>
<evidence type="ECO:0000255" key="3">
    <source>
        <dbReference type="PROSITE-ProRule" id="PRU00176"/>
    </source>
</evidence>
<evidence type="ECO:0000256" key="4">
    <source>
        <dbReference type="SAM" id="MobiDB-lite"/>
    </source>
</evidence>
<evidence type="ECO:0000269" key="5">
    <source>
    </source>
</evidence>
<evidence type="ECO:0000269" key="6">
    <source>
    </source>
</evidence>
<evidence type="ECO:0000303" key="7">
    <source>
    </source>
</evidence>
<evidence type="ECO:0000303" key="8">
    <source>
    </source>
</evidence>
<evidence type="ECO:0000303" key="9">
    <source>
    </source>
</evidence>
<evidence type="ECO:0000305" key="10"/>